<feature type="chain" id="PRO_0000251188" description="Testis-expressed protein 35">
    <location>
        <begin position="1"/>
        <end position="207"/>
    </location>
</feature>
<feature type="coiled-coil region" evidence="1">
    <location>
        <begin position="43"/>
        <end position="79"/>
    </location>
</feature>
<feature type="splice variant" id="VSP_020742" description="In isoform 2." evidence="3">
    <original>G</original>
    <variation>GR</variation>
    <location>
        <position position="188"/>
    </location>
</feature>
<feature type="sequence conflict" description="In Ref. 1; BAB24758 and 2; AAH99580." evidence="4" ref="1 2">
    <original>S</original>
    <variation>G</variation>
    <location>
        <position position="133"/>
    </location>
</feature>
<feature type="sequence conflict" description="In Ref. 1; BAB24758 and 2; AAH99580." evidence="4" ref="1 2">
    <original>V</original>
    <variation>A</variation>
    <location>
        <position position="145"/>
    </location>
</feature>
<evidence type="ECO:0000255" key="1"/>
<evidence type="ECO:0000269" key="2">
    <source>
    </source>
</evidence>
<evidence type="ECO:0000303" key="3">
    <source>
    </source>
</evidence>
<evidence type="ECO:0000305" key="4"/>
<proteinExistence type="evidence at transcript level"/>
<protein>
    <recommendedName>
        <fullName>Testis-expressed protein 35</fullName>
    </recommendedName>
    <alternativeName>
        <fullName>Testis-specific conserved protein of 24 kDa</fullName>
    </alternativeName>
</protein>
<reference key="1">
    <citation type="journal article" date="2005" name="Science">
        <title>The transcriptional landscape of the mammalian genome.</title>
        <authorList>
            <person name="Carninci P."/>
            <person name="Kasukawa T."/>
            <person name="Katayama S."/>
            <person name="Gough J."/>
            <person name="Frith M.C."/>
            <person name="Maeda N."/>
            <person name="Oyama R."/>
            <person name="Ravasi T."/>
            <person name="Lenhard B."/>
            <person name="Wells C."/>
            <person name="Kodzius R."/>
            <person name="Shimokawa K."/>
            <person name="Bajic V.B."/>
            <person name="Brenner S.E."/>
            <person name="Batalov S."/>
            <person name="Forrest A.R."/>
            <person name="Zavolan M."/>
            <person name="Davis M.J."/>
            <person name="Wilming L.G."/>
            <person name="Aidinis V."/>
            <person name="Allen J.E."/>
            <person name="Ambesi-Impiombato A."/>
            <person name="Apweiler R."/>
            <person name="Aturaliya R.N."/>
            <person name="Bailey T.L."/>
            <person name="Bansal M."/>
            <person name="Baxter L."/>
            <person name="Beisel K.W."/>
            <person name="Bersano T."/>
            <person name="Bono H."/>
            <person name="Chalk A.M."/>
            <person name="Chiu K.P."/>
            <person name="Choudhary V."/>
            <person name="Christoffels A."/>
            <person name="Clutterbuck D.R."/>
            <person name="Crowe M.L."/>
            <person name="Dalla E."/>
            <person name="Dalrymple B.P."/>
            <person name="de Bono B."/>
            <person name="Della Gatta G."/>
            <person name="di Bernardo D."/>
            <person name="Down T."/>
            <person name="Engstrom P."/>
            <person name="Fagiolini M."/>
            <person name="Faulkner G."/>
            <person name="Fletcher C.F."/>
            <person name="Fukushima T."/>
            <person name="Furuno M."/>
            <person name="Futaki S."/>
            <person name="Gariboldi M."/>
            <person name="Georgii-Hemming P."/>
            <person name="Gingeras T.R."/>
            <person name="Gojobori T."/>
            <person name="Green R.E."/>
            <person name="Gustincich S."/>
            <person name="Harbers M."/>
            <person name="Hayashi Y."/>
            <person name="Hensch T.K."/>
            <person name="Hirokawa N."/>
            <person name="Hill D."/>
            <person name="Huminiecki L."/>
            <person name="Iacono M."/>
            <person name="Ikeo K."/>
            <person name="Iwama A."/>
            <person name="Ishikawa T."/>
            <person name="Jakt M."/>
            <person name="Kanapin A."/>
            <person name="Katoh M."/>
            <person name="Kawasawa Y."/>
            <person name="Kelso J."/>
            <person name="Kitamura H."/>
            <person name="Kitano H."/>
            <person name="Kollias G."/>
            <person name="Krishnan S.P."/>
            <person name="Kruger A."/>
            <person name="Kummerfeld S.K."/>
            <person name="Kurochkin I.V."/>
            <person name="Lareau L.F."/>
            <person name="Lazarevic D."/>
            <person name="Lipovich L."/>
            <person name="Liu J."/>
            <person name="Liuni S."/>
            <person name="McWilliam S."/>
            <person name="Madan Babu M."/>
            <person name="Madera M."/>
            <person name="Marchionni L."/>
            <person name="Matsuda H."/>
            <person name="Matsuzawa S."/>
            <person name="Miki H."/>
            <person name="Mignone F."/>
            <person name="Miyake S."/>
            <person name="Morris K."/>
            <person name="Mottagui-Tabar S."/>
            <person name="Mulder N."/>
            <person name="Nakano N."/>
            <person name="Nakauchi H."/>
            <person name="Ng P."/>
            <person name="Nilsson R."/>
            <person name="Nishiguchi S."/>
            <person name="Nishikawa S."/>
            <person name="Nori F."/>
            <person name="Ohara O."/>
            <person name="Okazaki Y."/>
            <person name="Orlando V."/>
            <person name="Pang K.C."/>
            <person name="Pavan W.J."/>
            <person name="Pavesi G."/>
            <person name="Pesole G."/>
            <person name="Petrovsky N."/>
            <person name="Piazza S."/>
            <person name="Reed J."/>
            <person name="Reid J.F."/>
            <person name="Ring B.Z."/>
            <person name="Ringwald M."/>
            <person name="Rost B."/>
            <person name="Ruan Y."/>
            <person name="Salzberg S.L."/>
            <person name="Sandelin A."/>
            <person name="Schneider C."/>
            <person name="Schoenbach C."/>
            <person name="Sekiguchi K."/>
            <person name="Semple C.A."/>
            <person name="Seno S."/>
            <person name="Sessa L."/>
            <person name="Sheng Y."/>
            <person name="Shibata Y."/>
            <person name="Shimada H."/>
            <person name="Shimada K."/>
            <person name="Silva D."/>
            <person name="Sinclair B."/>
            <person name="Sperling S."/>
            <person name="Stupka E."/>
            <person name="Sugiura K."/>
            <person name="Sultana R."/>
            <person name="Takenaka Y."/>
            <person name="Taki K."/>
            <person name="Tammoja K."/>
            <person name="Tan S.L."/>
            <person name="Tang S."/>
            <person name="Taylor M.S."/>
            <person name="Tegner J."/>
            <person name="Teichmann S.A."/>
            <person name="Ueda H.R."/>
            <person name="van Nimwegen E."/>
            <person name="Verardo R."/>
            <person name="Wei C.L."/>
            <person name="Yagi K."/>
            <person name="Yamanishi H."/>
            <person name="Zabarovsky E."/>
            <person name="Zhu S."/>
            <person name="Zimmer A."/>
            <person name="Hide W."/>
            <person name="Bult C."/>
            <person name="Grimmond S.M."/>
            <person name="Teasdale R.D."/>
            <person name="Liu E.T."/>
            <person name="Brusic V."/>
            <person name="Quackenbush J."/>
            <person name="Wahlestedt C."/>
            <person name="Mattick J.S."/>
            <person name="Hume D.A."/>
            <person name="Kai C."/>
            <person name="Sasaki D."/>
            <person name="Tomaru Y."/>
            <person name="Fukuda S."/>
            <person name="Kanamori-Katayama M."/>
            <person name="Suzuki M."/>
            <person name="Aoki J."/>
            <person name="Arakawa T."/>
            <person name="Iida J."/>
            <person name="Imamura K."/>
            <person name="Itoh M."/>
            <person name="Kato T."/>
            <person name="Kawaji H."/>
            <person name="Kawagashira N."/>
            <person name="Kawashima T."/>
            <person name="Kojima M."/>
            <person name="Kondo S."/>
            <person name="Konno H."/>
            <person name="Nakano K."/>
            <person name="Ninomiya N."/>
            <person name="Nishio T."/>
            <person name="Okada M."/>
            <person name="Plessy C."/>
            <person name="Shibata K."/>
            <person name="Shiraki T."/>
            <person name="Suzuki S."/>
            <person name="Tagami M."/>
            <person name="Waki K."/>
            <person name="Watahiki A."/>
            <person name="Okamura-Oho Y."/>
            <person name="Suzuki H."/>
            <person name="Kawai J."/>
            <person name="Hayashizaki Y."/>
        </authorList>
    </citation>
    <scope>NUCLEOTIDE SEQUENCE [LARGE SCALE MRNA] (ISOFORM 1)</scope>
    <source>
        <strain>C57BL/6J</strain>
        <tissue>Testis</tissue>
    </source>
</reference>
<reference key="2">
    <citation type="journal article" date="2004" name="Genome Res.">
        <title>The status, quality, and expansion of the NIH full-length cDNA project: the Mammalian Gene Collection (MGC).</title>
        <authorList>
            <consortium name="The MGC Project Team"/>
        </authorList>
    </citation>
    <scope>NUCLEOTIDE SEQUENCE [LARGE SCALE MRNA] (ISOFORMS 1 AND 2)</scope>
    <source>
        <tissue>Testis</tissue>
    </source>
</reference>
<reference key="3">
    <citation type="journal article" date="2006" name="Biol. Pharm. Bull.">
        <title>Identification and characteristics of a novel testis-specific gene, Tsc24, in human and mice.</title>
        <authorList>
            <person name="Tang A."/>
            <person name="Yu Z."/>
            <person name="Gui Y."/>
            <person name="Guo X."/>
            <person name="Long Y."/>
            <person name="Cai Z."/>
        </authorList>
    </citation>
    <scope>SUBCELLULAR LOCATION</scope>
    <scope>TISSUE SPECIFICITY</scope>
</reference>
<comment type="subcellular location">
    <subcellularLocation>
        <location evidence="2">Nucleus</location>
    </subcellularLocation>
</comment>
<comment type="alternative products">
    <event type="alternative splicing"/>
    <isoform>
        <id>Q14BK3-1</id>
        <name>1</name>
        <sequence type="displayed"/>
    </isoform>
    <isoform>
        <id>Q14BK3-2</id>
        <name>2</name>
        <sequence type="described" ref="VSP_020742"/>
    </isoform>
</comment>
<comment type="tissue specificity">
    <text evidence="2">Testis-specific. Expressed during spermatogenesis.</text>
</comment>
<name>TEX35_MOUSE</name>
<dbReference type="EMBL" id="AK006825">
    <property type="protein sequence ID" value="BAB24758.1"/>
    <property type="molecule type" value="mRNA"/>
</dbReference>
<dbReference type="EMBL" id="BC099580">
    <property type="protein sequence ID" value="AAH99580.1"/>
    <property type="molecule type" value="mRNA"/>
</dbReference>
<dbReference type="EMBL" id="BC115790">
    <property type="protein sequence ID" value="AAI15791.1"/>
    <property type="molecule type" value="mRNA"/>
</dbReference>
<dbReference type="CCDS" id="CCDS48407.1">
    <molecule id="Q14BK3-2"/>
</dbReference>
<dbReference type="CCDS" id="CCDS78718.1">
    <molecule id="Q14BK3-1"/>
</dbReference>
<dbReference type="RefSeq" id="NP_001291988.1">
    <property type="nucleotide sequence ID" value="NM_001305059.1"/>
</dbReference>
<dbReference type="RefSeq" id="NP_001291990.1">
    <property type="nucleotide sequence ID" value="NM_001305061.1"/>
</dbReference>
<dbReference type="RefSeq" id="NP_001291991.1">
    <property type="nucleotide sequence ID" value="NM_001305062.1"/>
</dbReference>
<dbReference type="RefSeq" id="NP_001291992.1">
    <property type="nucleotide sequence ID" value="NM_001305063.1"/>
</dbReference>
<dbReference type="RefSeq" id="NP_082816.1">
    <property type="nucleotide sequence ID" value="NM_028540.3"/>
</dbReference>
<dbReference type="SMR" id="Q14BK3"/>
<dbReference type="FunCoup" id="Q14BK3">
    <property type="interactions" value="190"/>
</dbReference>
<dbReference type="STRING" id="10090.ENSMUSP00000114092"/>
<dbReference type="iPTMnet" id="Q14BK3"/>
<dbReference type="PhosphoSitePlus" id="Q14BK3"/>
<dbReference type="PaxDb" id="10090-ENSMUSP00000114092"/>
<dbReference type="ProteomicsDB" id="262764">
    <molecule id="Q14BK3-1"/>
</dbReference>
<dbReference type="ProteomicsDB" id="262765">
    <molecule id="Q14BK3-2"/>
</dbReference>
<dbReference type="GeneID" id="73435"/>
<dbReference type="KEGG" id="mmu:73435"/>
<dbReference type="AGR" id="MGI:1920685"/>
<dbReference type="CTD" id="84066"/>
<dbReference type="MGI" id="MGI:1920685">
    <property type="gene designation" value="Tex35"/>
</dbReference>
<dbReference type="eggNOG" id="ENOG502RVNR">
    <property type="taxonomic scope" value="Eukaryota"/>
</dbReference>
<dbReference type="InParanoid" id="Q14BK3"/>
<dbReference type="PhylomeDB" id="Q14BK3"/>
<dbReference type="TreeFam" id="TF337831"/>
<dbReference type="BioGRID-ORCS" id="73435">
    <property type="hits" value="1 hit in 60 CRISPR screens"/>
</dbReference>
<dbReference type="PRO" id="PR:Q14BK3"/>
<dbReference type="Proteomes" id="UP000000589">
    <property type="component" value="Unplaced"/>
</dbReference>
<dbReference type="RNAct" id="Q14BK3">
    <property type="molecule type" value="protein"/>
</dbReference>
<dbReference type="GO" id="GO:0005634">
    <property type="term" value="C:nucleus"/>
    <property type="evidence" value="ECO:0000314"/>
    <property type="project" value="UniProtKB"/>
</dbReference>
<dbReference type="InterPro" id="IPR027874">
    <property type="entry name" value="Tex35"/>
</dbReference>
<dbReference type="PANTHER" id="PTHR36860">
    <property type="entry name" value="TESTIS-EXPRESSED PROTEIN 35"/>
    <property type="match status" value="1"/>
</dbReference>
<dbReference type="PANTHER" id="PTHR36860:SF1">
    <property type="entry name" value="TESTIS-EXPRESSED PROTEIN 35"/>
    <property type="match status" value="1"/>
</dbReference>
<dbReference type="Pfam" id="PF15079">
    <property type="entry name" value="Tsc35"/>
    <property type="match status" value="1"/>
</dbReference>
<accession>Q14BK3</accession>
<accession>Q4KKY9</accession>
<accession>Q9D9J9</accession>
<keyword id="KW-0025">Alternative splicing</keyword>
<keyword id="KW-0175">Coiled coil</keyword>
<keyword id="KW-0539">Nucleus</keyword>
<keyword id="KW-1185">Reference proteome</keyword>
<gene>
    <name type="primary">Tex35</name>
    <name type="synonym">Tsc24</name>
</gene>
<organism>
    <name type="scientific">Mus musculus</name>
    <name type="common">Mouse</name>
    <dbReference type="NCBI Taxonomy" id="10090"/>
    <lineage>
        <taxon>Eukaryota</taxon>
        <taxon>Metazoa</taxon>
        <taxon>Chordata</taxon>
        <taxon>Craniata</taxon>
        <taxon>Vertebrata</taxon>
        <taxon>Euteleostomi</taxon>
        <taxon>Mammalia</taxon>
        <taxon>Eutheria</taxon>
        <taxon>Euarchontoglires</taxon>
        <taxon>Glires</taxon>
        <taxon>Rodentia</taxon>
        <taxon>Myomorpha</taxon>
        <taxon>Muroidea</taxon>
        <taxon>Muridae</taxon>
        <taxon>Murinae</taxon>
        <taxon>Mus</taxon>
        <taxon>Mus</taxon>
    </lineage>
</organism>
<sequence>MSAKNAELKKTNLKKNYKAVCMEPKLTQIYDFKGFKQEGLLIRKGMTRELKNELREVREQLTEKMEEIKQIKDIMDKDFDKLYEFVEIMKEMQQDMDEKMDVLINNQKNNKLPFQNQAKEQQKFWQLGKMDKSSQAMITEEPDGVPLACDKNVVPPKPTRNPLESLHPCQSCCEKCLLCALKTNRNQGRPSHHAWVPFSPLSSGAAF</sequence>